<organism>
    <name type="scientific">Staphylococcus aureus (strain N315)</name>
    <dbReference type="NCBI Taxonomy" id="158879"/>
    <lineage>
        <taxon>Bacteria</taxon>
        <taxon>Bacillati</taxon>
        <taxon>Bacillota</taxon>
        <taxon>Bacilli</taxon>
        <taxon>Bacillales</taxon>
        <taxon>Staphylococcaceae</taxon>
        <taxon>Staphylococcus</taxon>
    </lineage>
</organism>
<dbReference type="EC" id="1.2.1.88" evidence="1"/>
<dbReference type="EMBL" id="BA000018">
    <property type="protein sequence ID" value="BAB43645.1"/>
    <property type="molecule type" value="Genomic_DNA"/>
</dbReference>
<dbReference type="PIR" id="C90060">
    <property type="entry name" value="C90060"/>
</dbReference>
<dbReference type="SMR" id="P99076"/>
<dbReference type="EnsemblBacteria" id="BAB43645">
    <property type="protein sequence ID" value="BAB43645"/>
    <property type="gene ID" value="BAB43645"/>
</dbReference>
<dbReference type="KEGG" id="sau:SA2341"/>
<dbReference type="HOGENOM" id="CLU_005391_0_0_9"/>
<dbReference type="UniPathway" id="UPA00261">
    <property type="reaction ID" value="UER00374"/>
</dbReference>
<dbReference type="GO" id="GO:0009898">
    <property type="term" value="C:cytoplasmic side of plasma membrane"/>
    <property type="evidence" value="ECO:0007669"/>
    <property type="project" value="TreeGrafter"/>
</dbReference>
<dbReference type="GO" id="GO:0003842">
    <property type="term" value="F:1-pyrroline-5-carboxylate dehydrogenase activity"/>
    <property type="evidence" value="ECO:0007669"/>
    <property type="project" value="UniProtKB-UniRule"/>
</dbReference>
<dbReference type="GO" id="GO:0006537">
    <property type="term" value="P:glutamate biosynthetic process"/>
    <property type="evidence" value="ECO:0007669"/>
    <property type="project" value="UniProtKB-UniRule"/>
</dbReference>
<dbReference type="GO" id="GO:0010133">
    <property type="term" value="P:proline catabolic process to glutamate"/>
    <property type="evidence" value="ECO:0007669"/>
    <property type="project" value="UniProtKB-UniPathway"/>
</dbReference>
<dbReference type="CDD" id="cd07124">
    <property type="entry name" value="ALDH_PutA-P5CDH-RocA"/>
    <property type="match status" value="1"/>
</dbReference>
<dbReference type="FunFam" id="3.40.309.10:FF:000005">
    <property type="entry name" value="1-pyrroline-5-carboxylate dehydrogenase 1"/>
    <property type="match status" value="1"/>
</dbReference>
<dbReference type="FunFam" id="3.40.605.10:FF:000045">
    <property type="entry name" value="1-pyrroline-5-carboxylate dehydrogenase 1"/>
    <property type="match status" value="1"/>
</dbReference>
<dbReference type="Gene3D" id="3.40.605.10">
    <property type="entry name" value="Aldehyde Dehydrogenase, Chain A, domain 1"/>
    <property type="match status" value="1"/>
</dbReference>
<dbReference type="Gene3D" id="3.40.309.10">
    <property type="entry name" value="Aldehyde Dehydrogenase, Chain A, domain 2"/>
    <property type="match status" value="1"/>
</dbReference>
<dbReference type="HAMAP" id="MF_00733">
    <property type="entry name" value="RocA"/>
    <property type="match status" value="1"/>
</dbReference>
<dbReference type="InterPro" id="IPR016161">
    <property type="entry name" value="Ald_DH/histidinol_DH"/>
</dbReference>
<dbReference type="InterPro" id="IPR016163">
    <property type="entry name" value="Ald_DH_C"/>
</dbReference>
<dbReference type="InterPro" id="IPR016160">
    <property type="entry name" value="Ald_DH_CS_CYS"/>
</dbReference>
<dbReference type="InterPro" id="IPR029510">
    <property type="entry name" value="Ald_DH_CS_GLU"/>
</dbReference>
<dbReference type="InterPro" id="IPR016162">
    <property type="entry name" value="Ald_DH_N"/>
</dbReference>
<dbReference type="InterPro" id="IPR015590">
    <property type="entry name" value="Aldehyde_DH_dom"/>
</dbReference>
<dbReference type="InterPro" id="IPR050485">
    <property type="entry name" value="Proline_metab_enzyme"/>
</dbReference>
<dbReference type="InterPro" id="IPR005932">
    <property type="entry name" value="RocA"/>
</dbReference>
<dbReference type="InterPro" id="IPR047597">
    <property type="entry name" value="RocA_bacillales"/>
</dbReference>
<dbReference type="NCBIfam" id="TIGR01237">
    <property type="entry name" value="D1pyr5carbox2"/>
    <property type="match status" value="1"/>
</dbReference>
<dbReference type="NCBIfam" id="NF002852">
    <property type="entry name" value="PRK03137.1"/>
    <property type="match status" value="1"/>
</dbReference>
<dbReference type="PANTHER" id="PTHR42862">
    <property type="entry name" value="DELTA-1-PYRROLINE-5-CARBOXYLATE DEHYDROGENASE 1, ISOFORM A-RELATED"/>
    <property type="match status" value="1"/>
</dbReference>
<dbReference type="PANTHER" id="PTHR42862:SF1">
    <property type="entry name" value="DELTA-1-PYRROLINE-5-CARBOXYLATE DEHYDROGENASE 2, ISOFORM A-RELATED"/>
    <property type="match status" value="1"/>
</dbReference>
<dbReference type="Pfam" id="PF00171">
    <property type="entry name" value="Aldedh"/>
    <property type="match status" value="1"/>
</dbReference>
<dbReference type="SUPFAM" id="SSF53720">
    <property type="entry name" value="ALDH-like"/>
    <property type="match status" value="1"/>
</dbReference>
<dbReference type="PROSITE" id="PS00070">
    <property type="entry name" value="ALDEHYDE_DEHYDR_CYS"/>
    <property type="match status" value="1"/>
</dbReference>
<dbReference type="PROSITE" id="PS00687">
    <property type="entry name" value="ALDEHYDE_DEHYDR_GLU"/>
    <property type="match status" value="1"/>
</dbReference>
<keyword id="KW-0520">NAD</keyword>
<keyword id="KW-0560">Oxidoreductase</keyword>
<evidence type="ECO:0000255" key="1">
    <source>
        <dbReference type="HAMAP-Rule" id="MF_00733"/>
    </source>
</evidence>
<feature type="chain" id="PRO_0000056516" description="1-pyrroline-5-carboxylate dehydrogenase">
    <location>
        <begin position="1"/>
        <end position="514"/>
    </location>
</feature>
<feature type="active site" evidence="1">
    <location>
        <position position="286"/>
    </location>
</feature>
<feature type="active site" evidence="1">
    <location>
        <position position="320"/>
    </location>
</feature>
<comment type="catalytic activity">
    <reaction evidence="1">
        <text>L-glutamate 5-semialdehyde + NAD(+) + H2O = L-glutamate + NADH + 2 H(+)</text>
        <dbReference type="Rhea" id="RHEA:30235"/>
        <dbReference type="ChEBI" id="CHEBI:15377"/>
        <dbReference type="ChEBI" id="CHEBI:15378"/>
        <dbReference type="ChEBI" id="CHEBI:29985"/>
        <dbReference type="ChEBI" id="CHEBI:57540"/>
        <dbReference type="ChEBI" id="CHEBI:57945"/>
        <dbReference type="ChEBI" id="CHEBI:58066"/>
        <dbReference type="EC" id="1.2.1.88"/>
    </reaction>
</comment>
<comment type="pathway">
    <text evidence="1">Amino-acid degradation; L-proline degradation into L-glutamate; L-glutamate from L-proline: step 2/2.</text>
</comment>
<comment type="similarity">
    <text evidence="1">Belongs to the aldehyde dehydrogenase family. RocA subfamily.</text>
</comment>
<sequence>MVVEFKNEPGYDFSVQENVDMFKKALKDVEKELGQDIPLVINGEKIFKDDKIKSINPADTSQVIANASKATKQDVEDAFKAANEAYKSWKTWSANDRAELMLRVSAIIRRRKAEIAAIMVYEAGKPWDEAVGDAAEGIDFIEYYARSMMDLAQGKPVLDREGEHNKYFYKSIGTGVTIPPWNFPFAIMAGTTLAPVVAGNTVLLKPAEDTPYIAYKLMEILEEAGLPKGVVNFVPGDPKEIGDYLVDHKDTHFVTFTGSRATGTRIYERSAVVQEGQNFLKRVIAEMGGKDAIVVDENIDTDMAAEAIVTSAFGFSGQKCSACSRAIVHKDVYDEVLEKSIKLTKELTLGNTVDNTYMGPVINKKQFDKIKNYIEIGKEEGKLEQGGGTDDSKGYFVEPTIISGLKSKDRIMQEEIFGPVVGFVKVNDFDEAIEVANDTDYGLTGAVITNNREHWIKAVNEFDVGNLYLNRGCTSAVVGYHPFGGFKMSGTDAKTGSPDYLLHFLEQKVVSEMF</sequence>
<accession>P99076</accession>
<accession>Q99R82</accession>
<name>ROCA_STAAN</name>
<reference key="1">
    <citation type="journal article" date="2001" name="Lancet">
        <title>Whole genome sequencing of meticillin-resistant Staphylococcus aureus.</title>
        <authorList>
            <person name="Kuroda M."/>
            <person name="Ohta T."/>
            <person name="Uchiyama I."/>
            <person name="Baba T."/>
            <person name="Yuzawa H."/>
            <person name="Kobayashi I."/>
            <person name="Cui L."/>
            <person name="Oguchi A."/>
            <person name="Aoki K."/>
            <person name="Nagai Y."/>
            <person name="Lian J.-Q."/>
            <person name="Ito T."/>
            <person name="Kanamori M."/>
            <person name="Matsumaru H."/>
            <person name="Maruyama A."/>
            <person name="Murakami H."/>
            <person name="Hosoyama A."/>
            <person name="Mizutani-Ui Y."/>
            <person name="Takahashi N.K."/>
            <person name="Sawano T."/>
            <person name="Inoue R."/>
            <person name="Kaito C."/>
            <person name="Sekimizu K."/>
            <person name="Hirakawa H."/>
            <person name="Kuhara S."/>
            <person name="Goto S."/>
            <person name="Yabuzaki J."/>
            <person name="Kanehisa M."/>
            <person name="Yamashita A."/>
            <person name="Oshima K."/>
            <person name="Furuya K."/>
            <person name="Yoshino C."/>
            <person name="Shiba T."/>
            <person name="Hattori M."/>
            <person name="Ogasawara N."/>
            <person name="Hayashi H."/>
            <person name="Hiramatsu K."/>
        </authorList>
    </citation>
    <scope>NUCLEOTIDE SEQUENCE [LARGE SCALE GENOMIC DNA]</scope>
    <source>
        <strain>N315</strain>
    </source>
</reference>
<reference key="2">
    <citation type="journal article" date="2005" name="J. Microbiol. Methods">
        <title>Correlation of proteomic and transcriptomic profiles of Staphylococcus aureus during the post-exponential phase of growth.</title>
        <authorList>
            <person name="Scherl A."/>
            <person name="Francois P."/>
            <person name="Bento M."/>
            <person name="Deshusses J.M."/>
            <person name="Charbonnier Y."/>
            <person name="Converset V."/>
            <person name="Huyghe A."/>
            <person name="Walter N."/>
            <person name="Hoogland C."/>
            <person name="Appel R.D."/>
            <person name="Sanchez J.-C."/>
            <person name="Zimmermann-Ivol C.G."/>
            <person name="Corthals G.L."/>
            <person name="Hochstrasser D.F."/>
            <person name="Schrenzel J."/>
        </authorList>
    </citation>
    <scope>IDENTIFICATION BY MASS SPECTROMETRY</scope>
    <source>
        <strain>N315</strain>
    </source>
</reference>
<reference key="3">
    <citation type="submission" date="2007-10" db="UniProtKB">
        <title>Shotgun proteomic analysis of total and membrane protein extracts of S. aureus strain N315.</title>
        <authorList>
            <person name="Vaezzadeh A.R."/>
            <person name="Deshusses J."/>
            <person name="Lescuyer P."/>
            <person name="Hochstrasser D.F."/>
        </authorList>
    </citation>
    <scope>IDENTIFICATION BY MASS SPECTROMETRY [LARGE SCALE ANALYSIS]</scope>
    <source>
        <strain>N315</strain>
    </source>
</reference>
<proteinExistence type="evidence at protein level"/>
<protein>
    <recommendedName>
        <fullName evidence="1">1-pyrroline-5-carboxylate dehydrogenase</fullName>
        <shortName evidence="1">P5C dehydrogenase</shortName>
        <ecNumber evidence="1">1.2.1.88</ecNumber>
    </recommendedName>
    <alternativeName>
        <fullName evidence="1">L-glutamate gamma-semialdehyde dehydrogenase</fullName>
    </alternativeName>
</protein>
<gene>
    <name evidence="1" type="primary">rocA</name>
    <name type="ordered locus">SA2341</name>
</gene>